<name>GLGB_MOUSE</name>
<gene>
    <name type="primary">Gbe1</name>
</gene>
<feature type="initiator methionine" description="Removed" evidence="1">
    <location>
        <position position="1"/>
    </location>
</feature>
<feature type="chain" id="PRO_0000188776" description="1,4-alpha-glucan-branching enzyme">
    <location>
        <begin position="2"/>
        <end position="702"/>
    </location>
</feature>
<feature type="active site" description="Nucleophile" evidence="1">
    <location>
        <position position="357"/>
    </location>
</feature>
<feature type="active site" description="Proton donor" evidence="1">
    <location>
        <position position="412"/>
    </location>
</feature>
<feature type="binding site" evidence="1">
    <location>
        <begin position="62"/>
        <end position="63"/>
    </location>
    <ligand>
        <name>substrate</name>
    </ligand>
</feature>
<feature type="binding site" evidence="1">
    <location>
        <begin position="91"/>
        <end position="93"/>
    </location>
    <ligand>
        <name>substrate</name>
    </ligand>
</feature>
<feature type="binding site" evidence="2">
    <location>
        <position position="107"/>
    </location>
    <ligand>
        <name>(1,4-alpha-D-glucosyl)n</name>
        <dbReference type="ChEBI" id="CHEBI:15444"/>
    </ligand>
</feature>
<feature type="binding site" evidence="1">
    <location>
        <begin position="118"/>
        <end position="121"/>
    </location>
    <ligand>
        <name>substrate</name>
    </ligand>
</feature>
<feature type="binding site" evidence="2">
    <location>
        <position position="143"/>
    </location>
    <ligand>
        <name>(1,4-alpha-D-glucosyl)n</name>
        <dbReference type="ChEBI" id="CHEBI:15444"/>
    </ligand>
</feature>
<feature type="binding site" evidence="1">
    <location>
        <begin position="333"/>
        <end position="336"/>
    </location>
    <ligand>
        <name>substrate</name>
    </ligand>
</feature>
<feature type="site" description="Transition state stabilizer" evidence="1">
    <location>
        <position position="481"/>
    </location>
</feature>
<feature type="modified residue" description="N-acetylalanine" evidence="1">
    <location>
        <position position="2"/>
    </location>
</feature>
<feature type="modified residue" description="Phosphotyrosine" evidence="1">
    <location>
        <position position="173"/>
    </location>
</feature>
<dbReference type="EC" id="2.4.1.18" evidence="1"/>
<dbReference type="EMBL" id="AK009815">
    <property type="protein sequence ID" value="BAB26519.1"/>
    <property type="molecule type" value="mRNA"/>
</dbReference>
<dbReference type="EMBL" id="AK050365">
    <property type="protein sequence ID" value="BAC34210.1"/>
    <property type="molecule type" value="mRNA"/>
</dbReference>
<dbReference type="EMBL" id="BC017541">
    <property type="protein sequence ID" value="AAH17541.1"/>
    <property type="molecule type" value="mRNA"/>
</dbReference>
<dbReference type="RefSeq" id="NP_083079.1">
    <property type="nucleotide sequence ID" value="NM_028803.4"/>
</dbReference>
<dbReference type="SMR" id="Q9D6Y9"/>
<dbReference type="BioGRID" id="216557">
    <property type="interactions" value="4"/>
</dbReference>
<dbReference type="FunCoup" id="Q9D6Y9">
    <property type="interactions" value="1154"/>
</dbReference>
<dbReference type="IntAct" id="Q9D6Y9">
    <property type="interactions" value="1"/>
</dbReference>
<dbReference type="MINT" id="Q9D6Y9"/>
<dbReference type="STRING" id="10090.ENSMUSP00000132603"/>
<dbReference type="CAZy" id="CBM48">
    <property type="family name" value="Carbohydrate-Binding Module Family 48"/>
</dbReference>
<dbReference type="CAZy" id="GH13">
    <property type="family name" value="Glycoside Hydrolase Family 13"/>
</dbReference>
<dbReference type="GlyGen" id="Q9D6Y9">
    <property type="glycosylation" value="2 sites, 1 O-linked glycan (1 site)"/>
</dbReference>
<dbReference type="iPTMnet" id="Q9D6Y9"/>
<dbReference type="PhosphoSitePlus" id="Q9D6Y9"/>
<dbReference type="SwissPalm" id="Q9D6Y9"/>
<dbReference type="jPOST" id="Q9D6Y9"/>
<dbReference type="PaxDb" id="10090-ENSMUSP00000132603"/>
<dbReference type="ProteomicsDB" id="271229"/>
<dbReference type="Pumba" id="Q9D6Y9"/>
<dbReference type="Antibodypedia" id="32014">
    <property type="antibodies" value="390 antibodies from 28 providers"/>
</dbReference>
<dbReference type="DNASU" id="74185"/>
<dbReference type="Ensembl" id="ENSMUST00000163832.8">
    <property type="protein sequence ID" value="ENSMUSP00000132603.2"/>
    <property type="gene ID" value="ENSMUSG00000022707.18"/>
</dbReference>
<dbReference type="GeneID" id="74185"/>
<dbReference type="KEGG" id="mmu:74185"/>
<dbReference type="UCSC" id="uc007zqu.2">
    <property type="organism name" value="mouse"/>
</dbReference>
<dbReference type="AGR" id="MGI:1921435"/>
<dbReference type="CTD" id="2632"/>
<dbReference type="MGI" id="MGI:1921435">
    <property type="gene designation" value="Gbe1"/>
</dbReference>
<dbReference type="VEuPathDB" id="HostDB:ENSMUSG00000022707"/>
<dbReference type="eggNOG" id="KOG0470">
    <property type="taxonomic scope" value="Eukaryota"/>
</dbReference>
<dbReference type="GeneTree" id="ENSGT00390000017040"/>
<dbReference type="InParanoid" id="Q9D6Y9"/>
<dbReference type="OrthoDB" id="196493at2759"/>
<dbReference type="PhylomeDB" id="Q9D6Y9"/>
<dbReference type="TreeFam" id="TF300783"/>
<dbReference type="Reactome" id="R-MMU-3322077">
    <property type="pathway name" value="Glycogen synthesis"/>
</dbReference>
<dbReference type="UniPathway" id="UPA00164"/>
<dbReference type="BioGRID-ORCS" id="74185">
    <property type="hits" value="2 hits in 38 CRISPR screens"/>
</dbReference>
<dbReference type="ChiTaRS" id="Gbe1">
    <property type="organism name" value="mouse"/>
</dbReference>
<dbReference type="PRO" id="PR:Q9D6Y9"/>
<dbReference type="Proteomes" id="UP000000589">
    <property type="component" value="Chromosome 16"/>
</dbReference>
<dbReference type="RNAct" id="Q9D6Y9">
    <property type="molecule type" value="protein"/>
</dbReference>
<dbReference type="Bgee" id="ENSMUSG00000022707">
    <property type="expression patterns" value="Expressed in intercostal muscle and 230 other cell types or tissues"/>
</dbReference>
<dbReference type="ExpressionAtlas" id="Q9D6Y9">
    <property type="expression patterns" value="baseline and differential"/>
</dbReference>
<dbReference type="GO" id="GO:0005829">
    <property type="term" value="C:cytosol"/>
    <property type="evidence" value="ECO:0000314"/>
    <property type="project" value="MGI"/>
</dbReference>
<dbReference type="GO" id="GO:0003844">
    <property type="term" value="F:1,4-alpha-glucan branching enzyme activity"/>
    <property type="evidence" value="ECO:0000315"/>
    <property type="project" value="MGI"/>
</dbReference>
<dbReference type="GO" id="GO:0030246">
    <property type="term" value="F:carbohydrate binding"/>
    <property type="evidence" value="ECO:0007669"/>
    <property type="project" value="Ensembl"/>
</dbReference>
<dbReference type="GO" id="GO:0043169">
    <property type="term" value="F:cation binding"/>
    <property type="evidence" value="ECO:0007669"/>
    <property type="project" value="InterPro"/>
</dbReference>
<dbReference type="GO" id="GO:0004553">
    <property type="term" value="F:hydrolase activity, hydrolyzing O-glycosyl compounds"/>
    <property type="evidence" value="ECO:0007669"/>
    <property type="project" value="InterPro"/>
</dbReference>
<dbReference type="GO" id="GO:0005978">
    <property type="term" value="P:glycogen biosynthetic process"/>
    <property type="evidence" value="ECO:0000315"/>
    <property type="project" value="MGI"/>
</dbReference>
<dbReference type="GO" id="GO:0043524">
    <property type="term" value="P:negative regulation of neuron apoptotic process"/>
    <property type="evidence" value="ECO:0007669"/>
    <property type="project" value="Ensembl"/>
</dbReference>
<dbReference type="CDD" id="cd11321">
    <property type="entry name" value="AmyAc_bac_euk_BE"/>
    <property type="match status" value="1"/>
</dbReference>
<dbReference type="CDD" id="cd02854">
    <property type="entry name" value="E_set_GBE_euk_N"/>
    <property type="match status" value="1"/>
</dbReference>
<dbReference type="FunFam" id="3.20.20.80:FF:000001">
    <property type="entry name" value="1,4-alpha-glucan branching enzyme"/>
    <property type="match status" value="1"/>
</dbReference>
<dbReference type="FunFam" id="2.60.40.1180:FF:000014">
    <property type="entry name" value="1,4-alpha-glucan-branching enzyme"/>
    <property type="match status" value="1"/>
</dbReference>
<dbReference type="FunFam" id="2.60.40.10:FF:000550">
    <property type="entry name" value="1,4-alpha-glucan-branching enzyme isoform B"/>
    <property type="match status" value="1"/>
</dbReference>
<dbReference type="Gene3D" id="3.20.20.80">
    <property type="entry name" value="Glycosidases"/>
    <property type="match status" value="1"/>
</dbReference>
<dbReference type="Gene3D" id="2.60.40.1180">
    <property type="entry name" value="Golgi alpha-mannosidase II"/>
    <property type="match status" value="1"/>
</dbReference>
<dbReference type="Gene3D" id="2.60.40.10">
    <property type="entry name" value="Immunoglobulins"/>
    <property type="match status" value="1"/>
</dbReference>
<dbReference type="InterPro" id="IPR006048">
    <property type="entry name" value="A-amylase/branching_C"/>
</dbReference>
<dbReference type="InterPro" id="IPR037439">
    <property type="entry name" value="Branching_enzy"/>
</dbReference>
<dbReference type="InterPro" id="IPR006047">
    <property type="entry name" value="Glyco_hydro_13_cat_dom"/>
</dbReference>
<dbReference type="InterPro" id="IPR004193">
    <property type="entry name" value="Glyco_hydro_13_N"/>
</dbReference>
<dbReference type="InterPro" id="IPR013780">
    <property type="entry name" value="Glyco_hydro_b"/>
</dbReference>
<dbReference type="InterPro" id="IPR017853">
    <property type="entry name" value="Glycoside_hydrolase_SF"/>
</dbReference>
<dbReference type="InterPro" id="IPR013783">
    <property type="entry name" value="Ig-like_fold"/>
</dbReference>
<dbReference type="InterPro" id="IPR014756">
    <property type="entry name" value="Ig_E-set"/>
</dbReference>
<dbReference type="PANTHER" id="PTHR43651">
    <property type="entry name" value="1,4-ALPHA-GLUCAN-BRANCHING ENZYME"/>
    <property type="match status" value="1"/>
</dbReference>
<dbReference type="PANTHER" id="PTHR43651:SF3">
    <property type="entry name" value="1,4-ALPHA-GLUCAN-BRANCHING ENZYME"/>
    <property type="match status" value="1"/>
</dbReference>
<dbReference type="Pfam" id="PF00128">
    <property type="entry name" value="Alpha-amylase"/>
    <property type="match status" value="1"/>
</dbReference>
<dbReference type="Pfam" id="PF02806">
    <property type="entry name" value="Alpha-amylase_C"/>
    <property type="match status" value="1"/>
</dbReference>
<dbReference type="Pfam" id="PF02922">
    <property type="entry name" value="CBM_48"/>
    <property type="match status" value="1"/>
</dbReference>
<dbReference type="PIRSF" id="PIRSF000463">
    <property type="entry name" value="GlgB"/>
    <property type="match status" value="1"/>
</dbReference>
<dbReference type="SMART" id="SM00642">
    <property type="entry name" value="Aamy"/>
    <property type="match status" value="1"/>
</dbReference>
<dbReference type="SUPFAM" id="SSF51445">
    <property type="entry name" value="(Trans)glycosidases"/>
    <property type="match status" value="1"/>
</dbReference>
<dbReference type="SUPFAM" id="SSF81296">
    <property type="entry name" value="E set domains"/>
    <property type="match status" value="1"/>
</dbReference>
<dbReference type="SUPFAM" id="SSF51011">
    <property type="entry name" value="Glycosyl hydrolase domain"/>
    <property type="match status" value="1"/>
</dbReference>
<proteinExistence type="evidence at protein level"/>
<sequence>MAAPAAPAAGETGPDARLEAALADVPELARLLEIDPYLKPFAADFQRRYKKFSQVLHDIGENEGGIDKFSRGYESFGIHRCSDGGIYCKEWAPGAEGVFLTGEFSGWNPFSHPYKKLEYGKWELYIPPKQNKSPLIPHGSKLKVVITSKSGEILYRISPWAKYVVRENNNVNYDWIHWAPEDPYKFKHSRPKKPRSLRIYESHVGISSHEGKIASYKHFTSNVLPRIKDLGYNCIQLMAIMEHAYYASFGYQITSFFAASSRYGTPEELKELVDTAHSMGIVVLLDVVHSHASKNSEDGLNMFDGTDSCYFHSGPRGTHDLWDSRLFIYSSWEVLRFLLSNIRWWLEEYCFDGFRFDGVTSMLYHHHGMGQGFSGDYNEYFGLQVDEDALIYLMLANHLAHTLYPDSITIAEDVSGMPALCSPTSQGGGGFDYRLAMAIPDKWIQLLKEFKDEDWNMGNIVYTLTNRRYLEKCVAYAESHDQALVGDKTLAFWLMDAEMYTNMSVLAPFTPVIDRGIQLHKMIRLITHGLGGEGYLNFMGNEFGHPEWLDFPRKGNNESYHYARRQFNLTDDDLLRYKFLNNFDRDMNRLEERCGWLSAPQAYVSEKHEANKTITFERAGLLFIFNFHPSKSYTDYRVGTATPGKFKIVLDSDAAEYGGHQRLDHNTNYFAEAFEHNGRPYSLLVYIPSRVALILQNVDLQN</sequence>
<organism>
    <name type="scientific">Mus musculus</name>
    <name type="common">Mouse</name>
    <dbReference type="NCBI Taxonomy" id="10090"/>
    <lineage>
        <taxon>Eukaryota</taxon>
        <taxon>Metazoa</taxon>
        <taxon>Chordata</taxon>
        <taxon>Craniata</taxon>
        <taxon>Vertebrata</taxon>
        <taxon>Euteleostomi</taxon>
        <taxon>Mammalia</taxon>
        <taxon>Eutheria</taxon>
        <taxon>Euarchontoglires</taxon>
        <taxon>Glires</taxon>
        <taxon>Rodentia</taxon>
        <taxon>Myomorpha</taxon>
        <taxon>Muroidea</taxon>
        <taxon>Muridae</taxon>
        <taxon>Murinae</taxon>
        <taxon>Mus</taxon>
        <taxon>Mus</taxon>
    </lineage>
</organism>
<reference key="1">
    <citation type="journal article" date="2005" name="Science">
        <title>The transcriptional landscape of the mammalian genome.</title>
        <authorList>
            <person name="Carninci P."/>
            <person name="Kasukawa T."/>
            <person name="Katayama S."/>
            <person name="Gough J."/>
            <person name="Frith M.C."/>
            <person name="Maeda N."/>
            <person name="Oyama R."/>
            <person name="Ravasi T."/>
            <person name="Lenhard B."/>
            <person name="Wells C."/>
            <person name="Kodzius R."/>
            <person name="Shimokawa K."/>
            <person name="Bajic V.B."/>
            <person name="Brenner S.E."/>
            <person name="Batalov S."/>
            <person name="Forrest A.R."/>
            <person name="Zavolan M."/>
            <person name="Davis M.J."/>
            <person name="Wilming L.G."/>
            <person name="Aidinis V."/>
            <person name="Allen J.E."/>
            <person name="Ambesi-Impiombato A."/>
            <person name="Apweiler R."/>
            <person name="Aturaliya R.N."/>
            <person name="Bailey T.L."/>
            <person name="Bansal M."/>
            <person name="Baxter L."/>
            <person name="Beisel K.W."/>
            <person name="Bersano T."/>
            <person name="Bono H."/>
            <person name="Chalk A.M."/>
            <person name="Chiu K.P."/>
            <person name="Choudhary V."/>
            <person name="Christoffels A."/>
            <person name="Clutterbuck D.R."/>
            <person name="Crowe M.L."/>
            <person name="Dalla E."/>
            <person name="Dalrymple B.P."/>
            <person name="de Bono B."/>
            <person name="Della Gatta G."/>
            <person name="di Bernardo D."/>
            <person name="Down T."/>
            <person name="Engstrom P."/>
            <person name="Fagiolini M."/>
            <person name="Faulkner G."/>
            <person name="Fletcher C.F."/>
            <person name="Fukushima T."/>
            <person name="Furuno M."/>
            <person name="Futaki S."/>
            <person name="Gariboldi M."/>
            <person name="Georgii-Hemming P."/>
            <person name="Gingeras T.R."/>
            <person name="Gojobori T."/>
            <person name="Green R.E."/>
            <person name="Gustincich S."/>
            <person name="Harbers M."/>
            <person name="Hayashi Y."/>
            <person name="Hensch T.K."/>
            <person name="Hirokawa N."/>
            <person name="Hill D."/>
            <person name="Huminiecki L."/>
            <person name="Iacono M."/>
            <person name="Ikeo K."/>
            <person name="Iwama A."/>
            <person name="Ishikawa T."/>
            <person name="Jakt M."/>
            <person name="Kanapin A."/>
            <person name="Katoh M."/>
            <person name="Kawasawa Y."/>
            <person name="Kelso J."/>
            <person name="Kitamura H."/>
            <person name="Kitano H."/>
            <person name="Kollias G."/>
            <person name="Krishnan S.P."/>
            <person name="Kruger A."/>
            <person name="Kummerfeld S.K."/>
            <person name="Kurochkin I.V."/>
            <person name="Lareau L.F."/>
            <person name="Lazarevic D."/>
            <person name="Lipovich L."/>
            <person name="Liu J."/>
            <person name="Liuni S."/>
            <person name="McWilliam S."/>
            <person name="Madan Babu M."/>
            <person name="Madera M."/>
            <person name="Marchionni L."/>
            <person name="Matsuda H."/>
            <person name="Matsuzawa S."/>
            <person name="Miki H."/>
            <person name="Mignone F."/>
            <person name="Miyake S."/>
            <person name="Morris K."/>
            <person name="Mottagui-Tabar S."/>
            <person name="Mulder N."/>
            <person name="Nakano N."/>
            <person name="Nakauchi H."/>
            <person name="Ng P."/>
            <person name="Nilsson R."/>
            <person name="Nishiguchi S."/>
            <person name="Nishikawa S."/>
            <person name="Nori F."/>
            <person name="Ohara O."/>
            <person name="Okazaki Y."/>
            <person name="Orlando V."/>
            <person name="Pang K.C."/>
            <person name="Pavan W.J."/>
            <person name="Pavesi G."/>
            <person name="Pesole G."/>
            <person name="Petrovsky N."/>
            <person name="Piazza S."/>
            <person name="Reed J."/>
            <person name="Reid J.F."/>
            <person name="Ring B.Z."/>
            <person name="Ringwald M."/>
            <person name="Rost B."/>
            <person name="Ruan Y."/>
            <person name="Salzberg S.L."/>
            <person name="Sandelin A."/>
            <person name="Schneider C."/>
            <person name="Schoenbach C."/>
            <person name="Sekiguchi K."/>
            <person name="Semple C.A."/>
            <person name="Seno S."/>
            <person name="Sessa L."/>
            <person name="Sheng Y."/>
            <person name="Shibata Y."/>
            <person name="Shimada H."/>
            <person name="Shimada K."/>
            <person name="Silva D."/>
            <person name="Sinclair B."/>
            <person name="Sperling S."/>
            <person name="Stupka E."/>
            <person name="Sugiura K."/>
            <person name="Sultana R."/>
            <person name="Takenaka Y."/>
            <person name="Taki K."/>
            <person name="Tammoja K."/>
            <person name="Tan S.L."/>
            <person name="Tang S."/>
            <person name="Taylor M.S."/>
            <person name="Tegner J."/>
            <person name="Teichmann S.A."/>
            <person name="Ueda H.R."/>
            <person name="van Nimwegen E."/>
            <person name="Verardo R."/>
            <person name="Wei C.L."/>
            <person name="Yagi K."/>
            <person name="Yamanishi H."/>
            <person name="Zabarovsky E."/>
            <person name="Zhu S."/>
            <person name="Zimmer A."/>
            <person name="Hide W."/>
            <person name="Bult C."/>
            <person name="Grimmond S.M."/>
            <person name="Teasdale R.D."/>
            <person name="Liu E.T."/>
            <person name="Brusic V."/>
            <person name="Quackenbush J."/>
            <person name="Wahlestedt C."/>
            <person name="Mattick J.S."/>
            <person name="Hume D.A."/>
            <person name="Kai C."/>
            <person name="Sasaki D."/>
            <person name="Tomaru Y."/>
            <person name="Fukuda S."/>
            <person name="Kanamori-Katayama M."/>
            <person name="Suzuki M."/>
            <person name="Aoki J."/>
            <person name="Arakawa T."/>
            <person name="Iida J."/>
            <person name="Imamura K."/>
            <person name="Itoh M."/>
            <person name="Kato T."/>
            <person name="Kawaji H."/>
            <person name="Kawagashira N."/>
            <person name="Kawashima T."/>
            <person name="Kojima M."/>
            <person name="Kondo S."/>
            <person name="Konno H."/>
            <person name="Nakano K."/>
            <person name="Ninomiya N."/>
            <person name="Nishio T."/>
            <person name="Okada M."/>
            <person name="Plessy C."/>
            <person name="Shibata K."/>
            <person name="Shiraki T."/>
            <person name="Suzuki S."/>
            <person name="Tagami M."/>
            <person name="Waki K."/>
            <person name="Watahiki A."/>
            <person name="Okamura-Oho Y."/>
            <person name="Suzuki H."/>
            <person name="Kawai J."/>
            <person name="Hayashizaki Y."/>
        </authorList>
    </citation>
    <scope>NUCLEOTIDE SEQUENCE [LARGE SCALE MRNA]</scope>
    <source>
        <strain>C57BL/6J</strain>
        <tissue>Liver</tissue>
        <tissue>Tongue</tissue>
    </source>
</reference>
<reference key="2">
    <citation type="journal article" date="2004" name="Genome Res.">
        <title>The status, quality, and expansion of the NIH full-length cDNA project: the Mammalian Gene Collection (MGC).</title>
        <authorList>
            <consortium name="The MGC Project Team"/>
        </authorList>
    </citation>
    <scope>NUCLEOTIDE SEQUENCE [LARGE SCALE MRNA]</scope>
    <source>
        <tissue>Eye</tissue>
    </source>
</reference>
<reference key="3">
    <citation type="journal article" date="2010" name="Cell">
        <title>A tissue-specific atlas of mouse protein phosphorylation and expression.</title>
        <authorList>
            <person name="Huttlin E.L."/>
            <person name="Jedrychowski M.P."/>
            <person name="Elias J.E."/>
            <person name="Goswami T."/>
            <person name="Rad R."/>
            <person name="Beausoleil S.A."/>
            <person name="Villen J."/>
            <person name="Haas W."/>
            <person name="Sowa M.E."/>
            <person name="Gygi S.P."/>
        </authorList>
    </citation>
    <scope>IDENTIFICATION BY MASS SPECTROMETRY [LARGE SCALE ANALYSIS]</scope>
    <source>
        <tissue>Brain</tissue>
        <tissue>Brown adipose tissue</tissue>
        <tissue>Heart</tissue>
        <tissue>Kidney</tissue>
        <tissue>Liver</tissue>
        <tissue>Lung</tissue>
        <tissue>Pancreas</tissue>
        <tissue>Spleen</tissue>
        <tissue>Testis</tissue>
    </source>
</reference>
<keyword id="KW-0007">Acetylation</keyword>
<keyword id="KW-0320">Glycogen biosynthesis</keyword>
<keyword id="KW-0322">Glycogen storage disease</keyword>
<keyword id="KW-0328">Glycosyltransferase</keyword>
<keyword id="KW-0597">Phosphoprotein</keyword>
<keyword id="KW-1185">Reference proteome</keyword>
<keyword id="KW-0808">Transferase</keyword>
<evidence type="ECO:0000250" key="1">
    <source>
        <dbReference type="UniProtKB" id="Q04446"/>
    </source>
</evidence>
<evidence type="ECO:0000250" key="2">
    <source>
        <dbReference type="UniProtKB" id="Q6FJV0"/>
    </source>
</evidence>
<evidence type="ECO:0000305" key="3"/>
<accession>Q9D6Y9</accession>
<comment type="function">
    <text evidence="1">Glycogen-branching enzyme participates in the glycogen biosynthetic process along with glycogenin and glycogen synthase. Generates alpha-1,6-glucosidic branches from alpha-1,4-linked glucose chains, to increase solubility of the glycogen polymer.</text>
</comment>
<comment type="catalytic activity">
    <reaction evidence="1">
        <text>Transfers a segment of a (1-&gt;4)-alpha-D-glucan chain to a primary hydroxy group in a similar glucan chain.</text>
        <dbReference type="EC" id="2.4.1.18"/>
    </reaction>
</comment>
<comment type="pathway">
    <text evidence="1">Glycan biosynthesis; glycogen biosynthesis.</text>
</comment>
<comment type="subunit">
    <text evidence="1">Monomer.</text>
</comment>
<comment type="domain">
    <text evidence="1">Binds its carbohydrate substrate close to the active site, but also via regions close to the N-terminus; this may result in increased affinity and therefore increased catalytic efficiency.</text>
</comment>
<comment type="similarity">
    <text evidence="3">Belongs to the glycosyl hydrolase 13 family. GlgB subfamily.</text>
</comment>
<protein>
    <recommendedName>
        <fullName>1,4-alpha-glucan-branching enzyme</fullName>
        <ecNumber evidence="1">2.4.1.18</ecNumber>
    </recommendedName>
    <alternativeName>
        <fullName>Brancher enzyme</fullName>
    </alternativeName>
    <alternativeName>
        <fullName>Glycogen-branching enzyme</fullName>
    </alternativeName>
</protein>